<proteinExistence type="inferred from homology"/>
<sequence>MQISVNEFLTPRHIDVQVVSPTRAKITLEPLERGFGHTLGNALRRILLSSMPGCAVVEAEIDGVLHEYSAIEGVQEDVIEILLNLKGLAIKLHGRDEVTLTLSKKGSGVVTAADIQLDHDVEIVNPDHVIANLASNGVLNMKLTVARGRGYEPADSRQSDEDESRSIGRLQLDSSFSPVRRIAYVVENARVEQRTNLDKLVIDLETNGTLDPEEAIRRAATILQQQLAAFVDLKGDSEPVVIEQEDEIDPILLRPVDDLELTVRSANCLKAENIYYIGDLIQRTEVELLKTPNLGKKSLTEIKDVLASRGLSLGMRLDNWPPASLKKDDKATA</sequence>
<accession>Q889U6</accession>
<comment type="function">
    <text evidence="1">DNA-dependent RNA polymerase catalyzes the transcription of DNA into RNA using the four ribonucleoside triphosphates as substrates.</text>
</comment>
<comment type="catalytic activity">
    <reaction evidence="1">
        <text>RNA(n) + a ribonucleoside 5'-triphosphate = RNA(n+1) + diphosphate</text>
        <dbReference type="Rhea" id="RHEA:21248"/>
        <dbReference type="Rhea" id="RHEA-COMP:14527"/>
        <dbReference type="Rhea" id="RHEA-COMP:17342"/>
        <dbReference type="ChEBI" id="CHEBI:33019"/>
        <dbReference type="ChEBI" id="CHEBI:61557"/>
        <dbReference type="ChEBI" id="CHEBI:140395"/>
        <dbReference type="EC" id="2.7.7.6"/>
    </reaction>
</comment>
<comment type="subunit">
    <text evidence="1">Homodimer. The RNAP catalytic core consists of 2 alpha, 1 beta, 1 beta' and 1 omega subunit. When a sigma factor is associated with the core the holoenzyme is formed, which can initiate transcription.</text>
</comment>
<comment type="domain">
    <text evidence="1">The N-terminal domain is essential for RNAP assembly and basal transcription, whereas the C-terminal domain is involved in interaction with transcriptional regulators and with upstream promoter elements.</text>
</comment>
<comment type="similarity">
    <text evidence="1">Belongs to the RNA polymerase alpha chain family.</text>
</comment>
<evidence type="ECO:0000255" key="1">
    <source>
        <dbReference type="HAMAP-Rule" id="MF_00059"/>
    </source>
</evidence>
<protein>
    <recommendedName>
        <fullName evidence="1">DNA-directed RNA polymerase subunit alpha</fullName>
        <shortName evidence="1">RNAP subunit alpha</shortName>
        <ecNumber evidence="1">2.7.7.6</ecNumber>
    </recommendedName>
    <alternativeName>
        <fullName evidence="1">RNA polymerase subunit alpha</fullName>
    </alternativeName>
    <alternativeName>
        <fullName evidence="1">Transcriptase subunit alpha</fullName>
    </alternativeName>
</protein>
<organism>
    <name type="scientific">Pseudomonas syringae pv. tomato (strain ATCC BAA-871 / DC3000)</name>
    <dbReference type="NCBI Taxonomy" id="223283"/>
    <lineage>
        <taxon>Bacteria</taxon>
        <taxon>Pseudomonadati</taxon>
        <taxon>Pseudomonadota</taxon>
        <taxon>Gammaproteobacteria</taxon>
        <taxon>Pseudomonadales</taxon>
        <taxon>Pseudomonadaceae</taxon>
        <taxon>Pseudomonas</taxon>
    </lineage>
</organism>
<keyword id="KW-0240">DNA-directed RNA polymerase</keyword>
<keyword id="KW-0548">Nucleotidyltransferase</keyword>
<keyword id="KW-1185">Reference proteome</keyword>
<keyword id="KW-0804">Transcription</keyword>
<keyword id="KW-0808">Transferase</keyword>
<name>RPOA_PSESM</name>
<gene>
    <name evidence="1" type="primary">rpoA</name>
    <name type="ordered locus">PSPTO_0651</name>
</gene>
<feature type="chain" id="PRO_0000175362" description="DNA-directed RNA polymerase subunit alpha">
    <location>
        <begin position="1"/>
        <end position="333"/>
    </location>
</feature>
<feature type="region of interest" description="Alpha N-terminal domain (alpha-NTD)" evidence="1">
    <location>
        <begin position="1"/>
        <end position="234"/>
    </location>
</feature>
<feature type="region of interest" description="Alpha C-terminal domain (alpha-CTD)" evidence="1">
    <location>
        <begin position="248"/>
        <end position="333"/>
    </location>
</feature>
<reference key="1">
    <citation type="journal article" date="2003" name="Proc. Natl. Acad. Sci. U.S.A.">
        <title>The complete genome sequence of the Arabidopsis and tomato pathogen Pseudomonas syringae pv. tomato DC3000.</title>
        <authorList>
            <person name="Buell C.R."/>
            <person name="Joardar V."/>
            <person name="Lindeberg M."/>
            <person name="Selengut J."/>
            <person name="Paulsen I.T."/>
            <person name="Gwinn M.L."/>
            <person name="Dodson R.J."/>
            <person name="DeBoy R.T."/>
            <person name="Durkin A.S."/>
            <person name="Kolonay J.F."/>
            <person name="Madupu R."/>
            <person name="Daugherty S.C."/>
            <person name="Brinkac L.M."/>
            <person name="Beanan M.J."/>
            <person name="Haft D.H."/>
            <person name="Nelson W.C."/>
            <person name="Davidsen T.M."/>
            <person name="Zafar N."/>
            <person name="Zhou L."/>
            <person name="Liu J."/>
            <person name="Yuan Q."/>
            <person name="Khouri H.M."/>
            <person name="Fedorova N.B."/>
            <person name="Tran B."/>
            <person name="Russell D."/>
            <person name="Berry K.J."/>
            <person name="Utterback T.R."/>
            <person name="Van Aken S.E."/>
            <person name="Feldblyum T.V."/>
            <person name="D'Ascenzo M."/>
            <person name="Deng W.-L."/>
            <person name="Ramos A.R."/>
            <person name="Alfano J.R."/>
            <person name="Cartinhour S."/>
            <person name="Chatterjee A.K."/>
            <person name="Delaney T.P."/>
            <person name="Lazarowitz S.G."/>
            <person name="Martin G.B."/>
            <person name="Schneider D.J."/>
            <person name="Tang X."/>
            <person name="Bender C.L."/>
            <person name="White O."/>
            <person name="Fraser C.M."/>
            <person name="Collmer A."/>
        </authorList>
    </citation>
    <scope>NUCLEOTIDE SEQUENCE [LARGE SCALE GENOMIC DNA]</scope>
    <source>
        <strain>ATCC BAA-871 / DC3000</strain>
    </source>
</reference>
<dbReference type="EC" id="2.7.7.6" evidence="1"/>
<dbReference type="EMBL" id="AE016853">
    <property type="protein sequence ID" value="AAO54193.1"/>
    <property type="molecule type" value="Genomic_DNA"/>
</dbReference>
<dbReference type="RefSeq" id="NP_790498.1">
    <property type="nucleotide sequence ID" value="NC_004578.1"/>
</dbReference>
<dbReference type="RefSeq" id="WP_002555464.1">
    <property type="nucleotide sequence ID" value="NC_004578.1"/>
</dbReference>
<dbReference type="SMR" id="Q889U6"/>
<dbReference type="STRING" id="223283.PSPTO_0651"/>
<dbReference type="GeneID" id="96221005"/>
<dbReference type="KEGG" id="pst:PSPTO_0651"/>
<dbReference type="PATRIC" id="fig|223283.9.peg.657"/>
<dbReference type="eggNOG" id="COG0202">
    <property type="taxonomic scope" value="Bacteria"/>
</dbReference>
<dbReference type="HOGENOM" id="CLU_053084_0_1_6"/>
<dbReference type="OrthoDB" id="9805706at2"/>
<dbReference type="PhylomeDB" id="Q889U6"/>
<dbReference type="Proteomes" id="UP000002515">
    <property type="component" value="Chromosome"/>
</dbReference>
<dbReference type="GO" id="GO:0005737">
    <property type="term" value="C:cytoplasm"/>
    <property type="evidence" value="ECO:0007669"/>
    <property type="project" value="UniProtKB-ARBA"/>
</dbReference>
<dbReference type="GO" id="GO:0000428">
    <property type="term" value="C:DNA-directed RNA polymerase complex"/>
    <property type="evidence" value="ECO:0007669"/>
    <property type="project" value="UniProtKB-KW"/>
</dbReference>
<dbReference type="GO" id="GO:0003677">
    <property type="term" value="F:DNA binding"/>
    <property type="evidence" value="ECO:0007669"/>
    <property type="project" value="UniProtKB-UniRule"/>
</dbReference>
<dbReference type="GO" id="GO:0003899">
    <property type="term" value="F:DNA-directed RNA polymerase activity"/>
    <property type="evidence" value="ECO:0007669"/>
    <property type="project" value="UniProtKB-UniRule"/>
</dbReference>
<dbReference type="GO" id="GO:0046983">
    <property type="term" value="F:protein dimerization activity"/>
    <property type="evidence" value="ECO:0007669"/>
    <property type="project" value="InterPro"/>
</dbReference>
<dbReference type="GO" id="GO:0006351">
    <property type="term" value="P:DNA-templated transcription"/>
    <property type="evidence" value="ECO:0007669"/>
    <property type="project" value="UniProtKB-UniRule"/>
</dbReference>
<dbReference type="CDD" id="cd06928">
    <property type="entry name" value="RNAP_alpha_NTD"/>
    <property type="match status" value="1"/>
</dbReference>
<dbReference type="FunFam" id="1.10.150.20:FF:000001">
    <property type="entry name" value="DNA-directed RNA polymerase subunit alpha"/>
    <property type="match status" value="1"/>
</dbReference>
<dbReference type="FunFam" id="2.170.120.12:FF:000001">
    <property type="entry name" value="DNA-directed RNA polymerase subunit alpha"/>
    <property type="match status" value="1"/>
</dbReference>
<dbReference type="Gene3D" id="1.10.150.20">
    <property type="entry name" value="5' to 3' exonuclease, C-terminal subdomain"/>
    <property type="match status" value="1"/>
</dbReference>
<dbReference type="Gene3D" id="2.170.120.12">
    <property type="entry name" value="DNA-directed RNA polymerase, insert domain"/>
    <property type="match status" value="1"/>
</dbReference>
<dbReference type="Gene3D" id="3.30.1360.10">
    <property type="entry name" value="RNA polymerase, RBP11-like subunit"/>
    <property type="match status" value="1"/>
</dbReference>
<dbReference type="HAMAP" id="MF_00059">
    <property type="entry name" value="RNApol_bact_RpoA"/>
    <property type="match status" value="1"/>
</dbReference>
<dbReference type="InterPro" id="IPR011262">
    <property type="entry name" value="DNA-dir_RNA_pol_insert"/>
</dbReference>
<dbReference type="InterPro" id="IPR011263">
    <property type="entry name" value="DNA-dir_RNA_pol_RpoA/D/Rpb3"/>
</dbReference>
<dbReference type="InterPro" id="IPR011773">
    <property type="entry name" value="DNA-dir_RpoA"/>
</dbReference>
<dbReference type="InterPro" id="IPR036603">
    <property type="entry name" value="RBP11-like"/>
</dbReference>
<dbReference type="InterPro" id="IPR011260">
    <property type="entry name" value="RNAP_asu_C"/>
</dbReference>
<dbReference type="InterPro" id="IPR036643">
    <property type="entry name" value="RNApol_insert_sf"/>
</dbReference>
<dbReference type="NCBIfam" id="NF003513">
    <property type="entry name" value="PRK05182.1-2"/>
    <property type="match status" value="1"/>
</dbReference>
<dbReference type="NCBIfam" id="NF003519">
    <property type="entry name" value="PRK05182.2-5"/>
    <property type="match status" value="1"/>
</dbReference>
<dbReference type="NCBIfam" id="TIGR02027">
    <property type="entry name" value="rpoA"/>
    <property type="match status" value="1"/>
</dbReference>
<dbReference type="Pfam" id="PF01000">
    <property type="entry name" value="RNA_pol_A_bac"/>
    <property type="match status" value="1"/>
</dbReference>
<dbReference type="Pfam" id="PF03118">
    <property type="entry name" value="RNA_pol_A_CTD"/>
    <property type="match status" value="1"/>
</dbReference>
<dbReference type="Pfam" id="PF01193">
    <property type="entry name" value="RNA_pol_L"/>
    <property type="match status" value="1"/>
</dbReference>
<dbReference type="SMART" id="SM00662">
    <property type="entry name" value="RPOLD"/>
    <property type="match status" value="1"/>
</dbReference>
<dbReference type="SUPFAM" id="SSF47789">
    <property type="entry name" value="C-terminal domain of RNA polymerase alpha subunit"/>
    <property type="match status" value="1"/>
</dbReference>
<dbReference type="SUPFAM" id="SSF56553">
    <property type="entry name" value="Insert subdomain of RNA polymerase alpha subunit"/>
    <property type="match status" value="1"/>
</dbReference>
<dbReference type="SUPFAM" id="SSF55257">
    <property type="entry name" value="RBP11-like subunits of RNA polymerase"/>
    <property type="match status" value="1"/>
</dbReference>